<comment type="function">
    <text evidence="1">NAD-dependent protein deacetylase.</text>
</comment>
<comment type="catalytic activity">
    <reaction evidence="2">
        <text>N(6)-acetyl-L-lysyl-[protein] + NAD(+) + H2O = 2''-O-acetyl-ADP-D-ribose + nicotinamide + L-lysyl-[protein]</text>
        <dbReference type="Rhea" id="RHEA:43636"/>
        <dbReference type="Rhea" id="RHEA-COMP:9752"/>
        <dbReference type="Rhea" id="RHEA-COMP:10731"/>
        <dbReference type="ChEBI" id="CHEBI:15377"/>
        <dbReference type="ChEBI" id="CHEBI:17154"/>
        <dbReference type="ChEBI" id="CHEBI:29969"/>
        <dbReference type="ChEBI" id="CHEBI:57540"/>
        <dbReference type="ChEBI" id="CHEBI:61930"/>
        <dbReference type="ChEBI" id="CHEBI:83767"/>
        <dbReference type="EC" id="2.3.1.286"/>
    </reaction>
</comment>
<comment type="cofactor">
    <cofactor evidence="1">
        <name>Zn(2+)</name>
        <dbReference type="ChEBI" id="CHEBI:29105"/>
    </cofactor>
    <text evidence="1">Binds 1 zinc ion per subunit.</text>
</comment>
<comment type="similarity">
    <text evidence="3">Belongs to the sirtuin family. Class IV subfamily.</text>
</comment>
<organism>
    <name type="scientific">Caenorhabditis elegans</name>
    <dbReference type="NCBI Taxonomy" id="6239"/>
    <lineage>
        <taxon>Eukaryota</taxon>
        <taxon>Metazoa</taxon>
        <taxon>Ecdysozoa</taxon>
        <taxon>Nematoda</taxon>
        <taxon>Chromadorea</taxon>
        <taxon>Rhabditida</taxon>
        <taxon>Rhabditina</taxon>
        <taxon>Rhabditomorpha</taxon>
        <taxon>Rhabditoidea</taxon>
        <taxon>Rhabditidae</taxon>
        <taxon>Peloderinae</taxon>
        <taxon>Caenorhabditis</taxon>
    </lineage>
</organism>
<dbReference type="EC" id="2.3.1.286" evidence="2"/>
<dbReference type="EMBL" id="FO080102">
    <property type="protein sequence ID" value="CCD61225.1"/>
    <property type="molecule type" value="Genomic_DNA"/>
</dbReference>
<dbReference type="RefSeq" id="NP_491733.2">
    <property type="nucleotide sequence ID" value="NM_059332.5"/>
</dbReference>
<dbReference type="SMR" id="Q95Q89"/>
<dbReference type="BioGRID" id="47141">
    <property type="interactions" value="3"/>
</dbReference>
<dbReference type="FunCoup" id="Q95Q89">
    <property type="interactions" value="1700"/>
</dbReference>
<dbReference type="STRING" id="6239.C06A5.11a.1"/>
<dbReference type="PaxDb" id="6239-C06A5.11"/>
<dbReference type="PeptideAtlas" id="Q95Q89"/>
<dbReference type="EnsemblMetazoa" id="C06A5.11a.1">
    <property type="protein sequence ID" value="C06A5.11a.1"/>
    <property type="gene ID" value="WBGene00004803"/>
</dbReference>
<dbReference type="GeneID" id="182284"/>
<dbReference type="KEGG" id="cel:CELE_C06A5.11"/>
<dbReference type="UCSC" id="C06A5.11">
    <property type="organism name" value="c. elegans"/>
</dbReference>
<dbReference type="AGR" id="WB:WBGene00004803"/>
<dbReference type="CTD" id="182284"/>
<dbReference type="WormBase" id="C06A5.11a">
    <property type="protein sequence ID" value="CE45549"/>
    <property type="gene ID" value="WBGene00004803"/>
    <property type="gene designation" value="sir-2.4"/>
</dbReference>
<dbReference type="eggNOG" id="KOG1905">
    <property type="taxonomic scope" value="Eukaryota"/>
</dbReference>
<dbReference type="GeneTree" id="ENSGT00940000160088"/>
<dbReference type="HOGENOM" id="CLU_023643_6_0_1"/>
<dbReference type="InParanoid" id="Q95Q89"/>
<dbReference type="OMA" id="EQCKKCR"/>
<dbReference type="OrthoDB" id="2919105at2759"/>
<dbReference type="PhylomeDB" id="Q95Q89"/>
<dbReference type="Reactome" id="R-CEL-5693607">
    <property type="pathway name" value="Processing of DNA double-strand break ends"/>
</dbReference>
<dbReference type="PRO" id="PR:Q95Q89"/>
<dbReference type="Proteomes" id="UP000001940">
    <property type="component" value="Chromosome I"/>
</dbReference>
<dbReference type="Bgee" id="WBGene00004803">
    <property type="expression patterns" value="Expressed in germ line (C elegans) and 4 other cell types or tissues"/>
</dbReference>
<dbReference type="GO" id="GO:0010494">
    <property type="term" value="C:cytoplasmic stress granule"/>
    <property type="evidence" value="ECO:0000314"/>
    <property type="project" value="WormBase"/>
</dbReference>
<dbReference type="GO" id="GO:0005635">
    <property type="term" value="C:nuclear envelope"/>
    <property type="evidence" value="ECO:0000314"/>
    <property type="project" value="WormBase"/>
</dbReference>
<dbReference type="GO" id="GO:0005643">
    <property type="term" value="C:nuclear pore"/>
    <property type="evidence" value="ECO:0000314"/>
    <property type="project" value="WormBase"/>
</dbReference>
<dbReference type="GO" id="GO:0005634">
    <property type="term" value="C:nucleus"/>
    <property type="evidence" value="ECO:0000318"/>
    <property type="project" value="GO_Central"/>
</dbReference>
<dbReference type="GO" id="GO:0043186">
    <property type="term" value="C:P granule"/>
    <property type="evidence" value="ECO:0000314"/>
    <property type="project" value="WormBase"/>
</dbReference>
<dbReference type="GO" id="GO:0046969">
    <property type="term" value="F:histone H3K9 deacetylase activity, NAD-dependent"/>
    <property type="evidence" value="ECO:0000318"/>
    <property type="project" value="GO_Central"/>
</dbReference>
<dbReference type="GO" id="GO:0046872">
    <property type="term" value="F:metal ion binding"/>
    <property type="evidence" value="ECO:0007669"/>
    <property type="project" value="UniProtKB-KW"/>
</dbReference>
<dbReference type="GO" id="GO:0070403">
    <property type="term" value="F:NAD+ binding"/>
    <property type="evidence" value="ECO:0000318"/>
    <property type="project" value="GO_Central"/>
</dbReference>
<dbReference type="GO" id="GO:0034979">
    <property type="term" value="F:NAD-dependent protein lysine deacetylase activity"/>
    <property type="evidence" value="ECO:0000250"/>
    <property type="project" value="WormBase"/>
</dbReference>
<dbReference type="GO" id="GO:0061629">
    <property type="term" value="F:RNA polymerase II-specific DNA-binding transcription factor binding"/>
    <property type="evidence" value="ECO:0000353"/>
    <property type="project" value="WormBase"/>
</dbReference>
<dbReference type="GO" id="GO:0003714">
    <property type="term" value="F:transcription corepressor activity"/>
    <property type="evidence" value="ECO:0000318"/>
    <property type="project" value="GO_Central"/>
</dbReference>
<dbReference type="GO" id="GO:0000122">
    <property type="term" value="P:negative regulation of transcription by RNA polymerase II"/>
    <property type="evidence" value="ECO:0000318"/>
    <property type="project" value="GO_Central"/>
</dbReference>
<dbReference type="GO" id="GO:1903863">
    <property type="term" value="P:P granule assembly"/>
    <property type="evidence" value="ECO:0000315"/>
    <property type="project" value="WormBase"/>
</dbReference>
<dbReference type="GO" id="GO:0009408">
    <property type="term" value="P:response to heat"/>
    <property type="evidence" value="ECO:0000315"/>
    <property type="project" value="WormBase"/>
</dbReference>
<dbReference type="Gene3D" id="2.20.28.200">
    <property type="match status" value="1"/>
</dbReference>
<dbReference type="Gene3D" id="3.40.50.1220">
    <property type="entry name" value="TPP-binding domain"/>
    <property type="match status" value="1"/>
</dbReference>
<dbReference type="InterPro" id="IPR029035">
    <property type="entry name" value="DHS-like_NAD/FAD-binding_dom"/>
</dbReference>
<dbReference type="InterPro" id="IPR050134">
    <property type="entry name" value="NAD-dep_sirtuin_deacylases"/>
</dbReference>
<dbReference type="InterPro" id="IPR003000">
    <property type="entry name" value="Sirtuin"/>
</dbReference>
<dbReference type="InterPro" id="IPR026590">
    <property type="entry name" value="Ssirtuin_cat_dom"/>
</dbReference>
<dbReference type="PANTHER" id="PTHR11085">
    <property type="entry name" value="NAD-DEPENDENT PROTEIN DEACYLASE SIRTUIN-5, MITOCHONDRIAL-RELATED"/>
    <property type="match status" value="1"/>
</dbReference>
<dbReference type="PANTHER" id="PTHR11085:SF12">
    <property type="entry name" value="NAD-DEPENDENT PROTEIN DEACYLASE SIRTUIN-6"/>
    <property type="match status" value="1"/>
</dbReference>
<dbReference type="Pfam" id="PF02146">
    <property type="entry name" value="SIR2"/>
    <property type="match status" value="1"/>
</dbReference>
<dbReference type="SUPFAM" id="SSF52467">
    <property type="entry name" value="DHS-like NAD/FAD-binding domain"/>
    <property type="match status" value="1"/>
</dbReference>
<dbReference type="PROSITE" id="PS50305">
    <property type="entry name" value="SIRTUIN"/>
    <property type="match status" value="1"/>
</dbReference>
<reference key="1">
    <citation type="journal article" date="1998" name="Science">
        <title>Genome sequence of the nematode C. elegans: a platform for investigating biology.</title>
        <authorList>
            <consortium name="The C. elegans sequencing consortium"/>
        </authorList>
    </citation>
    <scope>NUCLEOTIDE SEQUENCE [LARGE SCALE GENOMIC DNA]</scope>
    <source>
        <strain>Bristol N2</strain>
    </source>
</reference>
<evidence type="ECO:0000250" key="1"/>
<evidence type="ECO:0000255" key="2">
    <source>
        <dbReference type="PROSITE-ProRule" id="PRU00236"/>
    </source>
</evidence>
<evidence type="ECO:0000305" key="3"/>
<name>SIR24_CAEEL</name>
<sequence>MTSVYESLLSDYPDKGVIGKPEIRDTETEIIEKLRTLYNHFVQAKQTGKPIFVLIGAGVSTGSKLPDFRGKQGVWTLQAEGKHAEGVDFQVARPGVSHKSILALHKAGYIKTIITQNVDGLDRKVGIPVEDLIEVHGNLFLEVCQSCFSEYVREEIVMSVGLCPTGRNCEGNKRTGRSCRGKLRDATLDWDTEISLNHLDRIRKAWKQTSHLLCIGTSLEIIPMGSLPLDAKSKGIKTTTINYQETAHEKIVETAIHADVKLILYSLCNALGVNVDLGDDLPDEVPIPLKIS</sequence>
<accession>Q95Q89</accession>
<keyword id="KW-0479">Metal-binding</keyword>
<keyword id="KW-0520">NAD</keyword>
<keyword id="KW-1185">Reference proteome</keyword>
<keyword id="KW-0808">Transferase</keyword>
<keyword id="KW-0862">Zinc</keyword>
<feature type="chain" id="PRO_0000417364" description="NAD-dependent protein deacetylase sir-2.4">
    <location>
        <begin position="1"/>
        <end position="292"/>
    </location>
</feature>
<feature type="domain" description="Deacetylase sirtuin-type" evidence="2">
    <location>
        <begin position="31"/>
        <end position="292"/>
    </location>
</feature>
<feature type="active site" description="Proton acceptor" evidence="2">
    <location>
        <position position="136"/>
    </location>
</feature>
<feature type="binding site" evidence="1">
    <location>
        <begin position="56"/>
        <end position="75"/>
    </location>
    <ligand>
        <name>NAD(+)</name>
        <dbReference type="ChEBI" id="CHEBI:57540"/>
    </ligand>
</feature>
<feature type="binding site" evidence="1">
    <location>
        <begin position="116"/>
        <end position="119"/>
    </location>
    <ligand>
        <name>NAD(+)</name>
        <dbReference type="ChEBI" id="CHEBI:57540"/>
    </ligand>
</feature>
<feature type="binding site" evidence="2">
    <location>
        <position position="144"/>
    </location>
    <ligand>
        <name>Zn(2+)</name>
        <dbReference type="ChEBI" id="CHEBI:29105"/>
    </ligand>
</feature>
<feature type="binding site" evidence="2">
    <location>
        <position position="147"/>
    </location>
    <ligand>
        <name>Zn(2+)</name>
        <dbReference type="ChEBI" id="CHEBI:29105"/>
    </ligand>
</feature>
<feature type="binding site" evidence="2">
    <location>
        <position position="163"/>
    </location>
    <ligand>
        <name>Zn(2+)</name>
        <dbReference type="ChEBI" id="CHEBI:29105"/>
    </ligand>
</feature>
<feature type="binding site" evidence="2">
    <location>
        <position position="169"/>
    </location>
    <ligand>
        <name>Zn(2+)</name>
        <dbReference type="ChEBI" id="CHEBI:29105"/>
    </ligand>
</feature>
<feature type="binding site" evidence="1">
    <location>
        <begin position="216"/>
        <end position="218"/>
    </location>
    <ligand>
        <name>NAD(+)</name>
        <dbReference type="ChEBI" id="CHEBI:57540"/>
    </ligand>
</feature>
<feature type="binding site" evidence="1">
    <location>
        <begin position="242"/>
        <end position="244"/>
    </location>
    <ligand>
        <name>NAD(+)</name>
        <dbReference type="ChEBI" id="CHEBI:57540"/>
    </ligand>
</feature>
<feature type="binding site" evidence="1">
    <location>
        <position position="260"/>
    </location>
    <ligand>
        <name>NAD(+)</name>
        <dbReference type="ChEBI" id="CHEBI:57540"/>
    </ligand>
</feature>
<proteinExistence type="inferred from homology"/>
<gene>
    <name type="primary">sir-2.4</name>
    <name type="ORF">C06A5.11</name>
</gene>
<protein>
    <recommendedName>
        <fullName>NAD-dependent protein deacetylase sir-2.4</fullName>
        <ecNumber evidence="2">2.3.1.286</ecNumber>
    </recommendedName>
    <alternativeName>
        <fullName>Regulatory protein SIR2 homolog 4</fullName>
    </alternativeName>
    <alternativeName>
        <fullName>SIR2-like protein 4</fullName>
    </alternativeName>
</protein>